<sequence length="334" mass="37444">MLFNLKNRHLLSLVHHTPQEIQFLLQLAKELKQAKYTGTEQPRLKGKNIALIFEKTSTRTRCSFEVAAYDQGANVTYIDPNSSQIGHKESMKDTARVLGRMYDAIEYRGFKQAVVNELAEYAGVPVFNGLTDEFHPTQMLADVLTMMEHSDKPLSDIIYVYIGDARNNMGNSLLLIGAKLGMDVRICAPKALQPEAELVAMCQEFAQQTGARITITEDVELAVKGVDFVHTDVWVSMGEPLESWGERINLLLPYQVTPALMQRSGNPKVKFMHCLPAFHNCETEVGKKIAEKYPHLANGIEVTEEVFESPMNIAFDQAENRMHTIKAVMVASLA</sequence>
<gene>
    <name type="primary">arcB</name>
</gene>
<proteinExistence type="inferred from homology"/>
<reference key="1">
    <citation type="submission" date="1997-06" db="EMBL/GenBank/DDBJ databases">
        <authorList>
            <person name="Wise A.G."/>
            <person name="Glisson J.R."/>
            <person name="Jackwood M.W."/>
        </authorList>
    </citation>
    <scope>NUCLEOTIDE SEQUENCE [GENOMIC DNA]</scope>
    <source>
        <strain>H-18</strain>
    </source>
</reference>
<comment type="function">
    <text evidence="1">Reversibly catalyzes the transfer of the carbamoyl group from carbamoyl phosphate (CP) to the N(epsilon) atom of ornithine (ORN) to produce L-citrulline.</text>
</comment>
<comment type="catalytic activity">
    <reaction>
        <text>carbamoyl phosphate + L-ornithine = L-citrulline + phosphate + H(+)</text>
        <dbReference type="Rhea" id="RHEA:19513"/>
        <dbReference type="ChEBI" id="CHEBI:15378"/>
        <dbReference type="ChEBI" id="CHEBI:43474"/>
        <dbReference type="ChEBI" id="CHEBI:46911"/>
        <dbReference type="ChEBI" id="CHEBI:57743"/>
        <dbReference type="ChEBI" id="CHEBI:58228"/>
        <dbReference type="EC" id="2.1.3.3"/>
    </reaction>
</comment>
<comment type="pathway">
    <text>Amino-acid degradation; L-arginine degradation via ADI pathway; carbamoyl phosphate from L-arginine: step 2/2.</text>
</comment>
<comment type="subcellular location">
    <subcellularLocation>
        <location evidence="1">Cytoplasm</location>
    </subcellularLocation>
</comment>
<comment type="similarity">
    <text evidence="3">Belongs to the aspartate/ornithine carbamoyltransferase superfamily. OTCase family.</text>
</comment>
<feature type="chain" id="PRO_0000112929" description="Ornithine carbamoyltransferase, catabolic">
    <location>
        <begin position="1"/>
        <end position="334"/>
    </location>
</feature>
<feature type="binding site" evidence="2">
    <location>
        <begin position="57"/>
        <end position="60"/>
    </location>
    <ligand>
        <name>carbamoyl phosphate</name>
        <dbReference type="ChEBI" id="CHEBI:58228"/>
    </ligand>
</feature>
<feature type="binding site" evidence="2">
    <location>
        <position position="84"/>
    </location>
    <ligand>
        <name>carbamoyl phosphate</name>
        <dbReference type="ChEBI" id="CHEBI:58228"/>
    </ligand>
</feature>
<feature type="binding site" evidence="2">
    <location>
        <position position="108"/>
    </location>
    <ligand>
        <name>carbamoyl phosphate</name>
        <dbReference type="ChEBI" id="CHEBI:58228"/>
    </ligand>
</feature>
<feature type="binding site" evidence="2">
    <location>
        <begin position="135"/>
        <end position="138"/>
    </location>
    <ligand>
        <name>carbamoyl phosphate</name>
        <dbReference type="ChEBI" id="CHEBI:58228"/>
    </ligand>
</feature>
<feature type="binding site" evidence="2">
    <location>
        <position position="168"/>
    </location>
    <ligand>
        <name>L-ornithine</name>
        <dbReference type="ChEBI" id="CHEBI:46911"/>
    </ligand>
</feature>
<feature type="binding site" evidence="2">
    <location>
        <position position="232"/>
    </location>
    <ligand>
        <name>L-ornithine</name>
        <dbReference type="ChEBI" id="CHEBI:46911"/>
    </ligand>
</feature>
<feature type="binding site" evidence="2">
    <location>
        <begin position="236"/>
        <end position="237"/>
    </location>
    <ligand>
        <name>L-ornithine</name>
        <dbReference type="ChEBI" id="CHEBI:46911"/>
    </ligand>
</feature>
<feature type="binding site" evidence="2">
    <location>
        <begin position="274"/>
        <end position="275"/>
    </location>
    <ligand>
        <name>carbamoyl phosphate</name>
        <dbReference type="ChEBI" id="CHEBI:58228"/>
    </ligand>
</feature>
<feature type="binding site" evidence="2">
    <location>
        <position position="321"/>
    </location>
    <ligand>
        <name>carbamoyl phosphate</name>
        <dbReference type="ChEBI" id="CHEBI:58228"/>
    </ligand>
</feature>
<organism>
    <name type="scientific">Avibacterium paragallinarum</name>
    <name type="common">Haemophilus gallinarum</name>
    <dbReference type="NCBI Taxonomy" id="728"/>
    <lineage>
        <taxon>Bacteria</taxon>
        <taxon>Pseudomonadati</taxon>
        <taxon>Pseudomonadota</taxon>
        <taxon>Gammaproteobacteria</taxon>
        <taxon>Pasteurellales</taxon>
        <taxon>Pasteurellaceae</taxon>
        <taxon>Avibacterium</taxon>
    </lineage>
</organism>
<name>OTCC_AVIPA</name>
<dbReference type="EC" id="2.1.3.3"/>
<dbReference type="EMBL" id="AF007428">
    <property type="protein sequence ID" value="AAD01405.1"/>
    <property type="molecule type" value="Genomic_DNA"/>
</dbReference>
<dbReference type="SMR" id="Q9ZIX8"/>
<dbReference type="STRING" id="728.VY92_07755"/>
<dbReference type="eggNOG" id="COG0078">
    <property type="taxonomic scope" value="Bacteria"/>
</dbReference>
<dbReference type="UniPathway" id="UPA00254">
    <property type="reaction ID" value="UER00365"/>
</dbReference>
<dbReference type="GO" id="GO:0005737">
    <property type="term" value="C:cytoplasm"/>
    <property type="evidence" value="ECO:0007669"/>
    <property type="project" value="UniProtKB-SubCell"/>
</dbReference>
<dbReference type="GO" id="GO:0016597">
    <property type="term" value="F:amino acid binding"/>
    <property type="evidence" value="ECO:0007669"/>
    <property type="project" value="InterPro"/>
</dbReference>
<dbReference type="GO" id="GO:0004585">
    <property type="term" value="F:ornithine carbamoyltransferase activity"/>
    <property type="evidence" value="ECO:0007669"/>
    <property type="project" value="UniProtKB-UniRule"/>
</dbReference>
<dbReference type="GO" id="GO:0042450">
    <property type="term" value="P:arginine biosynthetic process via ornithine"/>
    <property type="evidence" value="ECO:0007669"/>
    <property type="project" value="TreeGrafter"/>
</dbReference>
<dbReference type="GO" id="GO:0019547">
    <property type="term" value="P:arginine catabolic process to ornithine"/>
    <property type="evidence" value="ECO:0007669"/>
    <property type="project" value="UniProtKB-UniPathway"/>
</dbReference>
<dbReference type="GO" id="GO:0019240">
    <property type="term" value="P:citrulline biosynthetic process"/>
    <property type="evidence" value="ECO:0007669"/>
    <property type="project" value="TreeGrafter"/>
</dbReference>
<dbReference type="FunFam" id="3.40.50.1370:FF:000004">
    <property type="entry name" value="Ornithine carbamoyltransferase"/>
    <property type="match status" value="1"/>
</dbReference>
<dbReference type="Gene3D" id="3.40.50.1370">
    <property type="entry name" value="Aspartate/ornithine carbamoyltransferase"/>
    <property type="match status" value="2"/>
</dbReference>
<dbReference type="HAMAP" id="MF_01109">
    <property type="entry name" value="OTCase"/>
    <property type="match status" value="1"/>
</dbReference>
<dbReference type="InterPro" id="IPR006132">
    <property type="entry name" value="Asp/Orn_carbamoyltranf_P-bd"/>
</dbReference>
<dbReference type="InterPro" id="IPR006130">
    <property type="entry name" value="Asp/Orn_carbamoylTrfase"/>
</dbReference>
<dbReference type="InterPro" id="IPR036901">
    <property type="entry name" value="Asp/Orn_carbamoylTrfase_sf"/>
</dbReference>
<dbReference type="InterPro" id="IPR006131">
    <property type="entry name" value="Asp_carbamoyltransf_Asp/Orn-bd"/>
</dbReference>
<dbReference type="InterPro" id="IPR002292">
    <property type="entry name" value="Orn/put_carbamltrans"/>
</dbReference>
<dbReference type="InterPro" id="IPR024904">
    <property type="entry name" value="OTCase_ArgI"/>
</dbReference>
<dbReference type="NCBIfam" id="TIGR00658">
    <property type="entry name" value="orni_carb_tr"/>
    <property type="match status" value="1"/>
</dbReference>
<dbReference type="NCBIfam" id="NF001986">
    <property type="entry name" value="PRK00779.1"/>
    <property type="match status" value="1"/>
</dbReference>
<dbReference type="NCBIfam" id="NF002470">
    <property type="entry name" value="PRK01713.1"/>
    <property type="match status" value="1"/>
</dbReference>
<dbReference type="PANTHER" id="PTHR45753:SF2">
    <property type="entry name" value="ORNITHINE CARBAMOYLTRANSFERASE"/>
    <property type="match status" value="1"/>
</dbReference>
<dbReference type="PANTHER" id="PTHR45753">
    <property type="entry name" value="ORNITHINE CARBAMOYLTRANSFERASE, MITOCHONDRIAL"/>
    <property type="match status" value="1"/>
</dbReference>
<dbReference type="Pfam" id="PF00185">
    <property type="entry name" value="OTCace"/>
    <property type="match status" value="1"/>
</dbReference>
<dbReference type="Pfam" id="PF02729">
    <property type="entry name" value="OTCace_N"/>
    <property type="match status" value="1"/>
</dbReference>
<dbReference type="PRINTS" id="PR00100">
    <property type="entry name" value="AOTCASE"/>
</dbReference>
<dbReference type="PRINTS" id="PR00102">
    <property type="entry name" value="OTCASE"/>
</dbReference>
<dbReference type="SUPFAM" id="SSF53671">
    <property type="entry name" value="Aspartate/ornithine carbamoyltransferase"/>
    <property type="match status" value="1"/>
</dbReference>
<dbReference type="PROSITE" id="PS00097">
    <property type="entry name" value="CARBAMOYLTRANSFERASE"/>
    <property type="match status" value="1"/>
</dbReference>
<evidence type="ECO:0000250" key="1"/>
<evidence type="ECO:0000255" key="2">
    <source>
        <dbReference type="HAMAP-Rule" id="MF_01109"/>
    </source>
</evidence>
<evidence type="ECO:0000305" key="3"/>
<keyword id="KW-0056">Arginine metabolism</keyword>
<keyword id="KW-0963">Cytoplasm</keyword>
<keyword id="KW-0808">Transferase</keyword>
<accession>Q9ZIX8</accession>
<protein>
    <recommendedName>
        <fullName>Ornithine carbamoyltransferase, catabolic</fullName>
        <shortName>OTCase</shortName>
        <ecNumber>2.1.3.3</ecNumber>
    </recommendedName>
</protein>